<dbReference type="EC" id="3.2.1.67"/>
<dbReference type="EMBL" id="DQ490519">
    <property type="protein sequence ID" value="ABF50895.1"/>
    <property type="molecule type" value="mRNA"/>
</dbReference>
<dbReference type="EMBL" id="AACD01000161">
    <property type="protein sequence ID" value="EAA60554.1"/>
    <property type="molecule type" value="Genomic_DNA"/>
</dbReference>
<dbReference type="EMBL" id="BN001303">
    <property type="protein sequence ID" value="CBF78078.1"/>
    <property type="molecule type" value="Genomic_DNA"/>
</dbReference>
<dbReference type="RefSeq" id="XP_682030.1">
    <property type="nucleotide sequence ID" value="XM_676938.1"/>
</dbReference>
<dbReference type="SMR" id="Q5ASG9"/>
<dbReference type="STRING" id="227321.Q5ASG9"/>
<dbReference type="CAZy" id="GH28">
    <property type="family name" value="Glycoside Hydrolase Family 28"/>
</dbReference>
<dbReference type="GlyCosmos" id="Q5ASG9">
    <property type="glycosylation" value="12 sites, No reported glycans"/>
</dbReference>
<dbReference type="EnsemblFungi" id="CBF78078">
    <property type="protein sequence ID" value="CBF78078"/>
    <property type="gene ID" value="ANIA_08761"/>
</dbReference>
<dbReference type="KEGG" id="ani:ANIA_08761"/>
<dbReference type="VEuPathDB" id="FungiDB:AN8761"/>
<dbReference type="eggNOG" id="ENOG502QPPR">
    <property type="taxonomic scope" value="Eukaryota"/>
</dbReference>
<dbReference type="HOGENOM" id="CLU_016031_1_0_1"/>
<dbReference type="InParanoid" id="Q5ASG9"/>
<dbReference type="OMA" id="YSPQWYT"/>
<dbReference type="OrthoDB" id="187139at2759"/>
<dbReference type="Proteomes" id="UP000000560">
    <property type="component" value="Chromosome III"/>
</dbReference>
<dbReference type="GO" id="GO:0005576">
    <property type="term" value="C:extracellular region"/>
    <property type="evidence" value="ECO:0000250"/>
    <property type="project" value="UniProtKB"/>
</dbReference>
<dbReference type="GO" id="GO:0047911">
    <property type="term" value="F:galacturan 1,4-alpha-galacturonidase activity"/>
    <property type="evidence" value="ECO:0007669"/>
    <property type="project" value="UniProtKB-EC"/>
</dbReference>
<dbReference type="GO" id="GO:0004650">
    <property type="term" value="F:polygalacturonase activity"/>
    <property type="evidence" value="ECO:0000314"/>
    <property type="project" value="UniProtKB"/>
</dbReference>
<dbReference type="GO" id="GO:0071555">
    <property type="term" value="P:cell wall organization"/>
    <property type="evidence" value="ECO:0007669"/>
    <property type="project" value="UniProtKB-KW"/>
</dbReference>
<dbReference type="GO" id="GO:0045490">
    <property type="term" value="P:pectin catabolic process"/>
    <property type="evidence" value="ECO:0000314"/>
    <property type="project" value="UniProtKB"/>
</dbReference>
<dbReference type="FunFam" id="2.160.20.10:FF:000027">
    <property type="entry name" value="Probable exopolygalacturonase X"/>
    <property type="match status" value="1"/>
</dbReference>
<dbReference type="Gene3D" id="2.160.20.10">
    <property type="entry name" value="Single-stranded right-handed beta-helix, Pectin lyase-like"/>
    <property type="match status" value="1"/>
</dbReference>
<dbReference type="InterPro" id="IPR000743">
    <property type="entry name" value="Glyco_hydro_28"/>
</dbReference>
<dbReference type="InterPro" id="IPR006626">
    <property type="entry name" value="PbH1"/>
</dbReference>
<dbReference type="InterPro" id="IPR012334">
    <property type="entry name" value="Pectin_lyas_fold"/>
</dbReference>
<dbReference type="InterPro" id="IPR011050">
    <property type="entry name" value="Pectin_lyase_fold/virulence"/>
</dbReference>
<dbReference type="PANTHER" id="PTHR31736">
    <property type="match status" value="1"/>
</dbReference>
<dbReference type="PANTHER" id="PTHR31736:SF14">
    <property type="entry name" value="EXOPOLYGALACTURONASE X-1-RELATED"/>
    <property type="match status" value="1"/>
</dbReference>
<dbReference type="Pfam" id="PF00295">
    <property type="entry name" value="Glyco_hydro_28"/>
    <property type="match status" value="1"/>
</dbReference>
<dbReference type="SMART" id="SM00710">
    <property type="entry name" value="PbH1"/>
    <property type="match status" value="4"/>
</dbReference>
<dbReference type="SUPFAM" id="SSF51126">
    <property type="entry name" value="Pectin lyase-like"/>
    <property type="match status" value="1"/>
</dbReference>
<dbReference type="PROSITE" id="PS00502">
    <property type="entry name" value="POLYGALACTURONASE"/>
    <property type="match status" value="1"/>
</dbReference>
<organism>
    <name type="scientific">Emericella nidulans (strain FGSC A4 / ATCC 38163 / CBS 112.46 / NRRL 194 / M139)</name>
    <name type="common">Aspergillus nidulans</name>
    <dbReference type="NCBI Taxonomy" id="227321"/>
    <lineage>
        <taxon>Eukaryota</taxon>
        <taxon>Fungi</taxon>
        <taxon>Dikarya</taxon>
        <taxon>Ascomycota</taxon>
        <taxon>Pezizomycotina</taxon>
        <taxon>Eurotiomycetes</taxon>
        <taxon>Eurotiomycetidae</taxon>
        <taxon>Eurotiales</taxon>
        <taxon>Aspergillaceae</taxon>
        <taxon>Aspergillus</taxon>
        <taxon>Aspergillus subgen. Nidulantes</taxon>
    </lineage>
</organism>
<accession>Q5ASG9</accession>
<accession>C8V9X8</accession>
<accession>Q1HFQ5</accession>
<gene>
    <name type="primary">pgaX-1</name>
    <name type="ORF">AN8761</name>
</gene>
<name>PGLX1_EMENI</name>
<evidence type="ECO:0000250" key="1"/>
<evidence type="ECO:0000255" key="2"/>
<evidence type="ECO:0000255" key="3">
    <source>
        <dbReference type="PROSITE-ProRule" id="PRU10052"/>
    </source>
</evidence>
<evidence type="ECO:0000269" key="4">
    <source>
    </source>
</evidence>
<evidence type="ECO:0000305" key="5"/>
<protein>
    <recommendedName>
        <fullName>Exopolygalacturonase X-1</fullName>
        <shortName>ExoPG</shortName>
        <ecNumber>3.2.1.67</ecNumber>
    </recommendedName>
    <alternativeName>
        <fullName>Galacturan 1,4-alpha-galacturonidase</fullName>
    </alternativeName>
    <alternativeName>
        <fullName>Poly(1,4-alpha-D-galacturonide)galacturonohydrolase</fullName>
    </alternativeName>
</protein>
<reference key="1">
    <citation type="journal article" date="2006" name="Proc. Natl. Acad. Sci. U.S.A.">
        <title>Development and application of a suite of polysaccharide-degrading enzymes for analyzing plant cell walls.</title>
        <authorList>
            <person name="Bauer S."/>
            <person name="Vasu P."/>
            <person name="Persson S."/>
            <person name="Mort A.J."/>
            <person name="Somerville C.R."/>
        </authorList>
    </citation>
    <scope>NUCLEOTIDE SEQUENCE [MRNA]</scope>
    <scope>FUNCTION</scope>
    <scope>BIOPHYSICOCHEMICAL PROPERTIES</scope>
    <source>
        <strain>FGSC A4 / ATCC 38163 / CBS 112.46 / NRRL 194 / M139</strain>
    </source>
</reference>
<reference key="2">
    <citation type="journal article" date="2005" name="Nature">
        <title>Sequencing of Aspergillus nidulans and comparative analysis with A. fumigatus and A. oryzae.</title>
        <authorList>
            <person name="Galagan J.E."/>
            <person name="Calvo S.E."/>
            <person name="Cuomo C."/>
            <person name="Ma L.-J."/>
            <person name="Wortman J.R."/>
            <person name="Batzoglou S."/>
            <person name="Lee S.-I."/>
            <person name="Bastuerkmen M."/>
            <person name="Spevak C.C."/>
            <person name="Clutterbuck J."/>
            <person name="Kapitonov V."/>
            <person name="Jurka J."/>
            <person name="Scazzocchio C."/>
            <person name="Farman M.L."/>
            <person name="Butler J."/>
            <person name="Purcell S."/>
            <person name="Harris S."/>
            <person name="Braus G.H."/>
            <person name="Draht O."/>
            <person name="Busch S."/>
            <person name="D'Enfert C."/>
            <person name="Bouchier C."/>
            <person name="Goldman G.H."/>
            <person name="Bell-Pedersen D."/>
            <person name="Griffiths-Jones S."/>
            <person name="Doonan J.H."/>
            <person name="Yu J."/>
            <person name="Vienken K."/>
            <person name="Pain A."/>
            <person name="Freitag M."/>
            <person name="Selker E.U."/>
            <person name="Archer D.B."/>
            <person name="Penalva M.A."/>
            <person name="Oakley B.R."/>
            <person name="Momany M."/>
            <person name="Tanaka T."/>
            <person name="Kumagai T."/>
            <person name="Asai K."/>
            <person name="Machida M."/>
            <person name="Nierman W.C."/>
            <person name="Denning D.W."/>
            <person name="Caddick M.X."/>
            <person name="Hynes M."/>
            <person name="Paoletti M."/>
            <person name="Fischer R."/>
            <person name="Miller B.L."/>
            <person name="Dyer P.S."/>
            <person name="Sachs M.S."/>
            <person name="Osmani S.A."/>
            <person name="Birren B.W."/>
        </authorList>
    </citation>
    <scope>NUCLEOTIDE SEQUENCE [LARGE SCALE GENOMIC DNA]</scope>
    <source>
        <strain>FGSC A4 / ATCC 38163 / CBS 112.46 / NRRL 194 / M139</strain>
    </source>
</reference>
<reference key="3">
    <citation type="journal article" date="2009" name="Fungal Genet. Biol.">
        <title>The 2008 update of the Aspergillus nidulans genome annotation: a community effort.</title>
        <authorList>
            <person name="Wortman J.R."/>
            <person name="Gilsenan J.M."/>
            <person name="Joardar V."/>
            <person name="Deegan J."/>
            <person name="Clutterbuck J."/>
            <person name="Andersen M.R."/>
            <person name="Archer D."/>
            <person name="Bencina M."/>
            <person name="Braus G."/>
            <person name="Coutinho P."/>
            <person name="von Dohren H."/>
            <person name="Doonan J."/>
            <person name="Driessen A.J."/>
            <person name="Durek P."/>
            <person name="Espeso E."/>
            <person name="Fekete E."/>
            <person name="Flipphi M."/>
            <person name="Estrada C.G."/>
            <person name="Geysens S."/>
            <person name="Goldman G."/>
            <person name="de Groot P.W."/>
            <person name="Hansen K."/>
            <person name="Harris S.D."/>
            <person name="Heinekamp T."/>
            <person name="Helmstaedt K."/>
            <person name="Henrissat B."/>
            <person name="Hofmann G."/>
            <person name="Homan T."/>
            <person name="Horio T."/>
            <person name="Horiuchi H."/>
            <person name="James S."/>
            <person name="Jones M."/>
            <person name="Karaffa L."/>
            <person name="Karanyi Z."/>
            <person name="Kato M."/>
            <person name="Keller N."/>
            <person name="Kelly D.E."/>
            <person name="Kiel J.A."/>
            <person name="Kim J.M."/>
            <person name="van der Klei I.J."/>
            <person name="Klis F.M."/>
            <person name="Kovalchuk A."/>
            <person name="Krasevec N."/>
            <person name="Kubicek C.P."/>
            <person name="Liu B."/>
            <person name="Maccabe A."/>
            <person name="Meyer V."/>
            <person name="Mirabito P."/>
            <person name="Miskei M."/>
            <person name="Mos M."/>
            <person name="Mullins J."/>
            <person name="Nelson D.R."/>
            <person name="Nielsen J."/>
            <person name="Oakley B.R."/>
            <person name="Osmani S.A."/>
            <person name="Pakula T."/>
            <person name="Paszewski A."/>
            <person name="Paulsen I."/>
            <person name="Pilsyk S."/>
            <person name="Pocsi I."/>
            <person name="Punt P.J."/>
            <person name="Ram A.F."/>
            <person name="Ren Q."/>
            <person name="Robellet X."/>
            <person name="Robson G."/>
            <person name="Seiboth B."/>
            <person name="van Solingen P."/>
            <person name="Specht T."/>
            <person name="Sun J."/>
            <person name="Taheri-Talesh N."/>
            <person name="Takeshita N."/>
            <person name="Ussery D."/>
            <person name="vanKuyk P.A."/>
            <person name="Visser H."/>
            <person name="van de Vondervoort P.J."/>
            <person name="de Vries R.P."/>
            <person name="Walton J."/>
            <person name="Xiang X."/>
            <person name="Xiong Y."/>
            <person name="Zeng A.P."/>
            <person name="Brandt B.W."/>
            <person name="Cornell M.J."/>
            <person name="van den Hondel C.A."/>
            <person name="Visser J."/>
            <person name="Oliver S.G."/>
            <person name="Turner G."/>
        </authorList>
    </citation>
    <scope>GENOME REANNOTATION</scope>
    <source>
        <strain>FGSC A4 / ATCC 38163 / CBS 112.46 / NRRL 194 / M139</strain>
    </source>
</reference>
<feature type="signal peptide" evidence="2">
    <location>
        <begin position="1"/>
        <end position="22"/>
    </location>
</feature>
<feature type="chain" id="PRO_0000393672" description="Exopolygalacturonase X-1">
    <location>
        <begin position="23"/>
        <end position="434"/>
    </location>
</feature>
<feature type="repeat" description="PbH1 1">
    <location>
        <begin position="231"/>
        <end position="252"/>
    </location>
</feature>
<feature type="repeat" description="PbH1 2">
    <location>
        <begin position="254"/>
        <end position="274"/>
    </location>
</feature>
<feature type="repeat" description="PbH1 3">
    <location>
        <begin position="327"/>
        <end position="348"/>
    </location>
</feature>
<feature type="repeat" description="PbH1 4">
    <location>
        <begin position="362"/>
        <end position="405"/>
    </location>
</feature>
<feature type="active site" description="Proton donor" evidence="3">
    <location>
        <position position="245"/>
    </location>
</feature>
<feature type="active site" evidence="3">
    <location>
        <position position="268"/>
    </location>
</feature>
<feature type="glycosylation site" description="N-linked (GlcNAc...) asparagine" evidence="2">
    <location>
        <position position="113"/>
    </location>
</feature>
<feature type="glycosylation site" description="N-linked (GlcNAc...) asparagine" evidence="2">
    <location>
        <position position="129"/>
    </location>
</feature>
<feature type="glycosylation site" description="N-linked (GlcNAc...) asparagine" evidence="2">
    <location>
        <position position="199"/>
    </location>
</feature>
<feature type="glycosylation site" description="N-linked (GlcNAc...) asparagine" evidence="2">
    <location>
        <position position="253"/>
    </location>
</feature>
<feature type="glycosylation site" description="N-linked (GlcNAc...) asparagine" evidence="2">
    <location>
        <position position="265"/>
    </location>
</feature>
<feature type="glycosylation site" description="N-linked (GlcNAc...) asparagine" evidence="2">
    <location>
        <position position="292"/>
    </location>
</feature>
<feature type="glycosylation site" description="N-linked (GlcNAc...) asparagine" evidence="2">
    <location>
        <position position="297"/>
    </location>
</feature>
<feature type="glycosylation site" description="N-linked (GlcNAc...) asparagine" evidence="2">
    <location>
        <position position="329"/>
    </location>
</feature>
<feature type="glycosylation site" description="N-linked (GlcNAc...) asparagine" evidence="2">
    <location>
        <position position="354"/>
    </location>
</feature>
<feature type="glycosylation site" description="N-linked (GlcNAc...) asparagine" evidence="2">
    <location>
        <position position="364"/>
    </location>
</feature>
<feature type="glycosylation site" description="N-linked (GlcNAc...) asparagine" evidence="2">
    <location>
        <position position="423"/>
    </location>
</feature>
<feature type="glycosylation site" description="N-linked (GlcNAc...) asparagine" evidence="2">
    <location>
        <position position="430"/>
    </location>
</feature>
<feature type="disulfide bond" evidence="1">
    <location>
        <begin position="247"/>
        <end position="264"/>
    </location>
</feature>
<feature type="disulfide bond" evidence="1">
    <location>
        <begin position="392"/>
        <end position="398"/>
    </location>
</feature>
<comment type="function">
    <text evidence="4">Specific in hydrolyzing the terminal glycosidic bond of polygalacturonic acid and oligogalacturonates.</text>
</comment>
<comment type="catalytic activity">
    <reaction>
        <text>[(1-&gt;4)-alpha-D-galacturonosyl](n) + H2O = alpha-D-galacturonate + [(1-&gt;4)-alpha-D-galacturonosyl](n-1)</text>
        <dbReference type="Rhea" id="RHEA:14117"/>
        <dbReference type="Rhea" id="RHEA-COMP:14570"/>
        <dbReference type="Rhea" id="RHEA-COMP:14572"/>
        <dbReference type="ChEBI" id="CHEBI:15377"/>
        <dbReference type="ChEBI" id="CHEBI:58658"/>
        <dbReference type="ChEBI" id="CHEBI:140523"/>
        <dbReference type="EC" id="3.2.1.67"/>
    </reaction>
</comment>
<comment type="biophysicochemical properties">
    <phDependence>
        <text evidence="4">Optimum pH is 4.4.</text>
    </phDependence>
    <temperatureDependence>
        <text evidence="4">Optimum temperature is 48 degrees Celsius.</text>
    </temperatureDependence>
</comment>
<comment type="subcellular location">
    <subcellularLocation>
        <location evidence="1">Secreted</location>
    </subcellularLocation>
</comment>
<comment type="similarity">
    <text evidence="5">Belongs to the glycosyl hydrolase 28 family.</text>
</comment>
<proteinExistence type="evidence at protein level"/>
<keyword id="KW-0961">Cell wall biogenesis/degradation</keyword>
<keyword id="KW-1015">Disulfide bond</keyword>
<keyword id="KW-0325">Glycoprotein</keyword>
<keyword id="KW-0326">Glycosidase</keyword>
<keyword id="KW-0378">Hydrolase</keyword>
<keyword id="KW-1185">Reference proteome</keyword>
<keyword id="KW-0677">Repeat</keyword>
<keyword id="KW-0964">Secreted</keyword>
<keyword id="KW-0732">Signal</keyword>
<sequence length="434" mass="47537">MKLSHLLTSAVSVLSLGLTVEGHFSRSRNDAVGPKRPFKPLPYSHPRKKVCHVRSHGDGRDDSAFILSALKSCNNGGKVVFAEEKEYTIGTALDLTFLKHVDLEILGRIQFTNDTDYWQANSFKHTFQNATTFFQLGGEDVNVYGGGTLDGNGQIWYDLYAEDPLILRPILFGVIGLHGGTIGPLKLRYSPQWYQLVANSSDVLFDGIDISGYSKSENEAKNTDGWDTYRSKNIVIQNSVINNGDDCVSFKPNSTEILVQNLYCNGSHGISVGSLGQYIGEVDIVKNVLVYNISMYNASDMARIKVWPGVASAMSEDLQGGGGLGSVSNITYEDMYIENVDWAIEITQCYGQKNMTLCNEYPSNLTISDVYISNMYGTTSSARDPNIGTIVCSSPDVCSNIYVENIDVVSPSGTNDFICTNVNESLLQVNCTSG</sequence>